<reference key="1">
    <citation type="journal article" date="2015" name="Genome Announc.">
        <title>Genome sequence of Aspergillus flavus NRRL 3357, a strain that causes aflatoxin contamination of food and feed.</title>
        <authorList>
            <person name="Nierman W.C."/>
            <person name="Yu J."/>
            <person name="Fedorova-Abrams N.D."/>
            <person name="Losada L."/>
            <person name="Cleveland T.E."/>
            <person name="Bhatnagar D."/>
            <person name="Bennett J.W."/>
            <person name="Dean R."/>
            <person name="Payne G.A."/>
        </authorList>
    </citation>
    <scope>NUCLEOTIDE SEQUENCE [LARGE SCALE GENOMIC DNA]</scope>
    <source>
        <strain>ATCC 200026 / FGSC A1120 / IAM 13836 / NRRL 3357 / JCM 12722 / SRRC 167</strain>
    </source>
</reference>
<reference key="2">
    <citation type="journal article" date="2008" name="Int. J. Antimicrob. Agents">
        <title>Molecular characterisation of cyp51A and cyp51B genes coding for P450 14alpha-lanosterol demethylases A (CYP51Ap) and B (CYP51Bp) from voriconazole-resistant laboratory isolates of Aspergillus flavus.</title>
        <authorList>
            <person name="Krishnan-Natesan S."/>
            <person name="Chandrasekar P.H."/>
            <person name="Alangaden G.J."/>
            <person name="Manavathu E.K."/>
        </authorList>
    </citation>
    <scope>FUNCTION</scope>
    <scope>MUTAGENESIS OF HIS-389; ASP-401 AND THR-444</scope>
</reference>
<reference key="3">
    <citation type="journal article" date="2018" name="Antimicrob. Agents Chemother.">
        <title>Investigation of multiple resistance mechanisms in voriconazole-resistant Aspergillus flavus clinical isolates from a chest hospital surveillance in Delhi, India.</title>
        <authorList>
            <person name="Sharma C."/>
            <person name="Kumar R."/>
            <person name="Kumar N."/>
            <person name="Masih A."/>
            <person name="Gupta D."/>
            <person name="Chowdhary A."/>
        </authorList>
    </citation>
    <scope>FUNCTION</scope>
    <scope>INDUCTION</scope>
</reference>
<evidence type="ECO:0000250" key="1">
    <source>
        <dbReference type="UniProtKB" id="E9QY26"/>
    </source>
</evidence>
<evidence type="ECO:0000250" key="2">
    <source>
        <dbReference type="UniProtKB" id="P10613"/>
    </source>
</evidence>
<evidence type="ECO:0000250" key="3">
    <source>
        <dbReference type="UniProtKB" id="P10614"/>
    </source>
</evidence>
<evidence type="ECO:0000250" key="4">
    <source>
        <dbReference type="UniProtKB" id="Q4WNT5"/>
    </source>
</evidence>
<evidence type="ECO:0000255" key="5"/>
<evidence type="ECO:0000269" key="6">
    <source>
    </source>
</evidence>
<evidence type="ECO:0000269" key="7">
    <source>
    </source>
</evidence>
<evidence type="ECO:0000303" key="8">
    <source>
    </source>
</evidence>
<evidence type="ECO:0000305" key="9"/>
<evidence type="ECO:0000305" key="10">
    <source>
    </source>
</evidence>
<comment type="function">
    <text evidence="2 3 4">Sterol 14alpha-demethylase, encoded by cyp51A, cyp51B and cyp51C, that plays a critical role in the third module of ergosterol biosynthesis pathway, being ergosterol the major sterol component in fungal membranes that participates in a variety of functions (By similarity). The third module or late pathway involves the ergosterol synthesis itself through consecutive reactions that mainly occur in the endoplasmic reticulum (ER) membrane (By similarity). In filamentous fungi, during the initial step of this module, lanosterol (lanosta-8,24-dien-3beta-ol) can be metabolized to eburicol (By similarity). Sterol 14alpha-demethylase catalyzes the three-step oxidative removal of the 14alpha-methyl group (C-32) of both these sterols in the form of formate, and converts eburicol and lanosterol to 14-demethyleburicol (4,4,24-trimethylergosta-8,14,24(28)-trienol) and 4,4-dimethyl-5alpha-cholesta-8,14,24-trien-3beta-ol, respectively, which are further metabolized by other enzymes in the pathway to ergosterol (By similarity). Can also use substrates not intrinsic to fungi, such as 24,25-dihydrolanosterol (DHL), producing 4,4'-dimethyl-8,14-cholestadien-3-beta-ol, but at lower rates than the endogenous substrates (By similarity).</text>
</comment>
<comment type="function">
    <text evidence="6 7">As a target of azole drugs, plays a crucial role in azole susceptibility (PubMed:18775650, PubMed:29311090).</text>
</comment>
<comment type="catalytic activity">
    <reaction evidence="4">
        <text>a 14alpha-methyl steroid + 3 reduced [NADPH--hemoprotein reductase] + 3 O2 = a Delta(14) steroid + formate + 3 oxidized [NADPH--hemoprotein reductase] + 4 H2O + 4 H(+)</text>
        <dbReference type="Rhea" id="RHEA:54028"/>
        <dbReference type="Rhea" id="RHEA-COMP:11964"/>
        <dbReference type="Rhea" id="RHEA-COMP:11965"/>
        <dbReference type="ChEBI" id="CHEBI:15377"/>
        <dbReference type="ChEBI" id="CHEBI:15378"/>
        <dbReference type="ChEBI" id="CHEBI:15379"/>
        <dbReference type="ChEBI" id="CHEBI:15740"/>
        <dbReference type="ChEBI" id="CHEBI:57618"/>
        <dbReference type="ChEBI" id="CHEBI:58210"/>
        <dbReference type="ChEBI" id="CHEBI:138029"/>
        <dbReference type="ChEBI" id="CHEBI:138031"/>
        <dbReference type="EC" id="1.14.14.154"/>
    </reaction>
    <physiologicalReaction direction="left-to-right" evidence="4">
        <dbReference type="Rhea" id="RHEA:54029"/>
    </physiologicalReaction>
</comment>
<comment type="catalytic activity">
    <reaction evidence="3">
        <text>a 14alpha-methyl steroid + reduced [NADPH--hemoprotein reductase] + O2 = a 14alpha-hydroxymethyl steroid + oxidized [NADPH--hemoprotein reductase] + H2O + H(+)</text>
        <dbReference type="Rhea" id="RHEA:68060"/>
        <dbReference type="Rhea" id="RHEA-COMP:11964"/>
        <dbReference type="Rhea" id="RHEA-COMP:11965"/>
        <dbReference type="ChEBI" id="CHEBI:15377"/>
        <dbReference type="ChEBI" id="CHEBI:15378"/>
        <dbReference type="ChEBI" id="CHEBI:15379"/>
        <dbReference type="ChEBI" id="CHEBI:57618"/>
        <dbReference type="ChEBI" id="CHEBI:58210"/>
        <dbReference type="ChEBI" id="CHEBI:138029"/>
        <dbReference type="ChEBI" id="CHEBI:176901"/>
    </reaction>
    <physiologicalReaction direction="left-to-right" evidence="3">
        <dbReference type="Rhea" id="RHEA:68061"/>
    </physiologicalReaction>
</comment>
<comment type="catalytic activity">
    <reaction evidence="3">
        <text>a 14alpha-hydroxymethyl steroid + reduced [NADPH--hemoprotein reductase] + O2 = a 14alpha-formyl steroid + oxidized [NADPH--hemoprotein reductase] + 2 H2O + H(+)</text>
        <dbReference type="Rhea" id="RHEA:68064"/>
        <dbReference type="Rhea" id="RHEA-COMP:11964"/>
        <dbReference type="Rhea" id="RHEA-COMP:11965"/>
        <dbReference type="ChEBI" id="CHEBI:15377"/>
        <dbReference type="ChEBI" id="CHEBI:15378"/>
        <dbReference type="ChEBI" id="CHEBI:15379"/>
        <dbReference type="ChEBI" id="CHEBI:57618"/>
        <dbReference type="ChEBI" id="CHEBI:58210"/>
        <dbReference type="ChEBI" id="CHEBI:176901"/>
        <dbReference type="ChEBI" id="CHEBI:176902"/>
    </reaction>
    <physiologicalReaction direction="left-to-right" evidence="3">
        <dbReference type="Rhea" id="RHEA:68065"/>
    </physiologicalReaction>
</comment>
<comment type="catalytic activity">
    <reaction evidence="3">
        <text>a 14alpha-formyl steroid + reduced [NADPH--hemoprotein reductase] + O2 = a Delta(14) steroid + formate + oxidized [NADPH--hemoprotein reductase] + H2O + 2 H(+)</text>
        <dbReference type="Rhea" id="RHEA:68068"/>
        <dbReference type="Rhea" id="RHEA-COMP:11964"/>
        <dbReference type="Rhea" id="RHEA-COMP:11965"/>
        <dbReference type="ChEBI" id="CHEBI:15377"/>
        <dbReference type="ChEBI" id="CHEBI:15378"/>
        <dbReference type="ChEBI" id="CHEBI:15379"/>
        <dbReference type="ChEBI" id="CHEBI:15740"/>
        <dbReference type="ChEBI" id="CHEBI:57618"/>
        <dbReference type="ChEBI" id="CHEBI:58210"/>
        <dbReference type="ChEBI" id="CHEBI:138031"/>
        <dbReference type="ChEBI" id="CHEBI:176902"/>
    </reaction>
    <physiologicalReaction direction="left-to-right" evidence="3">
        <dbReference type="Rhea" id="RHEA:68069"/>
    </physiologicalReaction>
</comment>
<comment type="catalytic activity">
    <reaction evidence="4">
        <text>lanosterol + 3 reduced [NADPH--hemoprotein reductase] + 3 O2 = 4,4-dimethyl-5alpha-cholesta-8,14,24-trien-3beta-ol + formate + 3 oxidized [NADPH--hemoprotein reductase] + 4 H2O + 4 H(+)</text>
        <dbReference type="Rhea" id="RHEA:25286"/>
        <dbReference type="Rhea" id="RHEA-COMP:11964"/>
        <dbReference type="Rhea" id="RHEA-COMP:11965"/>
        <dbReference type="ChEBI" id="CHEBI:15377"/>
        <dbReference type="ChEBI" id="CHEBI:15378"/>
        <dbReference type="ChEBI" id="CHEBI:15379"/>
        <dbReference type="ChEBI" id="CHEBI:15740"/>
        <dbReference type="ChEBI" id="CHEBI:16521"/>
        <dbReference type="ChEBI" id="CHEBI:17813"/>
        <dbReference type="ChEBI" id="CHEBI:57618"/>
        <dbReference type="ChEBI" id="CHEBI:58210"/>
        <dbReference type="EC" id="1.14.14.154"/>
    </reaction>
    <physiologicalReaction direction="left-to-right" evidence="4">
        <dbReference type="Rhea" id="RHEA:25287"/>
    </physiologicalReaction>
</comment>
<comment type="catalytic activity">
    <reaction evidence="3">
        <text>lanosterol + reduced [NADPH--hemoprotein reductase] + O2 = 32-hydroxylanosterol + oxidized [NADPH--hemoprotein reductase] + H2O + H(+)</text>
        <dbReference type="Rhea" id="RHEA:75103"/>
        <dbReference type="Rhea" id="RHEA-COMP:11964"/>
        <dbReference type="Rhea" id="RHEA-COMP:11965"/>
        <dbReference type="ChEBI" id="CHEBI:15377"/>
        <dbReference type="ChEBI" id="CHEBI:15378"/>
        <dbReference type="ChEBI" id="CHEBI:15379"/>
        <dbReference type="ChEBI" id="CHEBI:16521"/>
        <dbReference type="ChEBI" id="CHEBI:57618"/>
        <dbReference type="ChEBI" id="CHEBI:58210"/>
        <dbReference type="ChEBI" id="CHEBI:166806"/>
    </reaction>
    <physiologicalReaction direction="left-to-right" evidence="3">
        <dbReference type="Rhea" id="RHEA:75104"/>
    </physiologicalReaction>
</comment>
<comment type="catalytic activity">
    <reaction evidence="3">
        <text>32-hydroxylanosterol + reduced [NADPH--hemoprotein reductase] + O2 = 32-oxolanosterol + oxidized [NADPH--hemoprotein reductase] + 2 H2O + H(+)</text>
        <dbReference type="Rhea" id="RHEA:75107"/>
        <dbReference type="Rhea" id="RHEA-COMP:11964"/>
        <dbReference type="Rhea" id="RHEA-COMP:11965"/>
        <dbReference type="ChEBI" id="CHEBI:15377"/>
        <dbReference type="ChEBI" id="CHEBI:15378"/>
        <dbReference type="ChEBI" id="CHEBI:15379"/>
        <dbReference type="ChEBI" id="CHEBI:57618"/>
        <dbReference type="ChEBI" id="CHEBI:58210"/>
        <dbReference type="ChEBI" id="CHEBI:166681"/>
        <dbReference type="ChEBI" id="CHEBI:166806"/>
    </reaction>
    <physiologicalReaction direction="left-to-right" evidence="3">
        <dbReference type="Rhea" id="RHEA:75108"/>
    </physiologicalReaction>
</comment>
<comment type="catalytic activity">
    <reaction evidence="3">
        <text>32-oxolanosterol + reduced [NADPH--hemoprotein reductase] + O2 = 4,4-dimethyl-5alpha-cholesta-8,14,24-trien-3beta-ol + formate + oxidized [NADPH--hemoprotein reductase] + H2O + 2 H(+)</text>
        <dbReference type="Rhea" id="RHEA:75111"/>
        <dbReference type="Rhea" id="RHEA-COMP:11964"/>
        <dbReference type="Rhea" id="RHEA-COMP:11965"/>
        <dbReference type="ChEBI" id="CHEBI:15377"/>
        <dbReference type="ChEBI" id="CHEBI:15378"/>
        <dbReference type="ChEBI" id="CHEBI:15379"/>
        <dbReference type="ChEBI" id="CHEBI:15740"/>
        <dbReference type="ChEBI" id="CHEBI:17813"/>
        <dbReference type="ChEBI" id="CHEBI:57618"/>
        <dbReference type="ChEBI" id="CHEBI:58210"/>
        <dbReference type="ChEBI" id="CHEBI:166681"/>
    </reaction>
    <physiologicalReaction direction="left-to-right" evidence="3">
        <dbReference type="Rhea" id="RHEA:75112"/>
    </physiologicalReaction>
</comment>
<comment type="catalytic activity">
    <reaction evidence="4">
        <text>eburicol + 3 reduced [NADPH--hemoprotein reductase] + 3 O2 = 14-demethyleburicol + formate + 3 oxidized [NADPH--hemoprotein reductase] + 4 H2O + 4 H(+)</text>
        <dbReference type="Rhea" id="RHEA:75439"/>
        <dbReference type="Rhea" id="RHEA-COMP:11964"/>
        <dbReference type="Rhea" id="RHEA-COMP:11965"/>
        <dbReference type="ChEBI" id="CHEBI:15377"/>
        <dbReference type="ChEBI" id="CHEBI:15378"/>
        <dbReference type="ChEBI" id="CHEBI:15379"/>
        <dbReference type="ChEBI" id="CHEBI:15740"/>
        <dbReference type="ChEBI" id="CHEBI:57618"/>
        <dbReference type="ChEBI" id="CHEBI:58210"/>
        <dbReference type="ChEBI" id="CHEBI:70315"/>
        <dbReference type="ChEBI" id="CHEBI:194330"/>
    </reaction>
    <physiologicalReaction direction="left-to-right" evidence="4">
        <dbReference type="Rhea" id="RHEA:75440"/>
    </physiologicalReaction>
</comment>
<comment type="catalytic activity">
    <reaction evidence="3">
        <text>eburicol + reduced [NADPH--hemoprotein reductase] + O2 = 32-hydroxyeburicol + oxidized [NADPH--hemoprotein reductase] + H2O + H(+)</text>
        <dbReference type="Rhea" id="RHEA:75427"/>
        <dbReference type="Rhea" id="RHEA-COMP:11964"/>
        <dbReference type="Rhea" id="RHEA-COMP:11965"/>
        <dbReference type="ChEBI" id="CHEBI:15377"/>
        <dbReference type="ChEBI" id="CHEBI:15378"/>
        <dbReference type="ChEBI" id="CHEBI:15379"/>
        <dbReference type="ChEBI" id="CHEBI:57618"/>
        <dbReference type="ChEBI" id="CHEBI:58210"/>
        <dbReference type="ChEBI" id="CHEBI:70315"/>
        <dbReference type="ChEBI" id="CHEBI:194328"/>
    </reaction>
    <physiologicalReaction direction="left-to-right" evidence="3">
        <dbReference type="Rhea" id="RHEA:75428"/>
    </physiologicalReaction>
</comment>
<comment type="catalytic activity">
    <reaction evidence="3">
        <text>32-hydroxyeburicol + reduced [NADPH--hemoprotein reductase] + O2 = 32-oxoeburicol + oxidized [NADPH--hemoprotein reductase] + 2 H2O + H(+)</text>
        <dbReference type="Rhea" id="RHEA:75431"/>
        <dbReference type="Rhea" id="RHEA-COMP:11964"/>
        <dbReference type="Rhea" id="RHEA-COMP:11965"/>
        <dbReference type="ChEBI" id="CHEBI:15377"/>
        <dbReference type="ChEBI" id="CHEBI:15378"/>
        <dbReference type="ChEBI" id="CHEBI:15379"/>
        <dbReference type="ChEBI" id="CHEBI:57618"/>
        <dbReference type="ChEBI" id="CHEBI:58210"/>
        <dbReference type="ChEBI" id="CHEBI:194328"/>
        <dbReference type="ChEBI" id="CHEBI:194329"/>
    </reaction>
    <physiologicalReaction direction="left-to-right" evidence="3">
        <dbReference type="Rhea" id="RHEA:75432"/>
    </physiologicalReaction>
</comment>
<comment type="catalytic activity">
    <reaction evidence="3">
        <text>32-oxoeburicol + reduced [NADPH--hemoprotein reductase] + O2 = 14-demethyleburicol + formate + oxidized [NADPH--hemoprotein reductase] + H2O + 2 H(+)</text>
        <dbReference type="Rhea" id="RHEA:75435"/>
        <dbReference type="Rhea" id="RHEA-COMP:11964"/>
        <dbReference type="Rhea" id="RHEA-COMP:11965"/>
        <dbReference type="ChEBI" id="CHEBI:15377"/>
        <dbReference type="ChEBI" id="CHEBI:15378"/>
        <dbReference type="ChEBI" id="CHEBI:15379"/>
        <dbReference type="ChEBI" id="CHEBI:15740"/>
        <dbReference type="ChEBI" id="CHEBI:57618"/>
        <dbReference type="ChEBI" id="CHEBI:58210"/>
        <dbReference type="ChEBI" id="CHEBI:194329"/>
        <dbReference type="ChEBI" id="CHEBI:194330"/>
    </reaction>
    <physiologicalReaction direction="left-to-right" evidence="3">
        <dbReference type="Rhea" id="RHEA:75436"/>
    </physiologicalReaction>
</comment>
<comment type="cofactor">
    <cofactor evidence="1">
        <name>heme</name>
        <dbReference type="ChEBI" id="CHEBI:30413"/>
    </cofactor>
</comment>
<comment type="pathway">
    <text evidence="1">Steroid biosynthesis; sterol biosynthesis.</text>
</comment>
<comment type="subcellular location">
    <subcellularLocation>
        <location evidence="9">Endoplasmic reticulum membrane</location>
        <topology evidence="5">Single-pass membrane protein</topology>
    </subcellularLocation>
</comment>
<comment type="induction">
    <text evidence="7">Over-expressed in azole-resistant clinical isolates.</text>
</comment>
<comment type="similarity">
    <text evidence="9">Belongs to the cytochrome P450 family.</text>
</comment>
<comment type="sequence caution" evidence="9">
    <conflict type="erroneous initiation">
        <sequence resource="EMBL-CDS" id="EED50354"/>
    </conflict>
    <text>Extended N-terminus.</text>
</comment>
<proteinExistence type="evidence at protein level"/>
<sequence length="491" mass="55410">MGILAVILDSVCERCSGSSLWMLSTVALLSILVVSVVINVLRQLLFKNYKEPPLVFHWFPFIGSTISYGMDPYRFFFNCREKYGDIFTFVLLGKKTTVYLGTKGNDFILNGKLRDVCAEEVYSPLTTPVFGRHVVYDCPNAKLMEQKKGPNGVFDVCKTIAEITIYTASRSLQGKEVRSRFDSTFAELYHDLDMGFAPINFMLPWAPLPHNRKRDAAQKRMTETYMEIIKERRKAGSKKDSEDMVWNLMSCMYKDGTPVPDEEIAHMMIALLMAGQHSSSSTAAWIVLHLAASPEITEELYQEQLRILGHDMPPLTYENLQKLDLHAKVIKETLRIHAPIHSIIRAVKNPMPVEGTPYVIPTSHNVLSSPGVTARSEEHFPDPLEWKPHRWDEAIAVSSEDEEKVDYGYGLVTKGTNSPYLPFGAGRHRCIGEQFAYVQLGAITAALVRLFKFSNLPGVQTLPDTDYSSLFSKPLGNSKIQFEKREPVTKA</sequence>
<accession>B8NFL5</accession>
<name>CP51B_ASPFN</name>
<protein>
    <recommendedName>
        <fullName evidence="8">Sterol 14-alpha demethylase</fullName>
        <ecNumber evidence="10">1.14.14.154</ecNumber>
    </recommendedName>
    <alternativeName>
        <fullName evidence="8">Cytochrome P450 monooxygenase 51B</fullName>
    </alternativeName>
    <alternativeName>
        <fullName evidence="8">Ergosterol biosynthesis protein cyp51B</fullName>
    </alternativeName>
</protein>
<keyword id="KW-0256">Endoplasmic reticulum</keyword>
<keyword id="KW-0349">Heme</keyword>
<keyword id="KW-0408">Iron</keyword>
<keyword id="KW-0472">Membrane</keyword>
<keyword id="KW-0479">Metal-binding</keyword>
<keyword id="KW-0489">Methyltransferase</keyword>
<keyword id="KW-0503">Monooxygenase</keyword>
<keyword id="KW-0560">Oxidoreductase</keyword>
<keyword id="KW-0808">Transferase</keyword>
<keyword id="KW-0812">Transmembrane</keyword>
<keyword id="KW-1133">Transmembrane helix</keyword>
<feature type="chain" id="PRO_0000448947" description="Sterol 14-alpha demethylase">
    <location>
        <begin position="1"/>
        <end position="491"/>
    </location>
</feature>
<feature type="transmembrane region" description="Helical" evidence="5">
    <location>
        <begin position="20"/>
        <end position="40"/>
    </location>
</feature>
<feature type="binding site" description="axial binding residue" evidence="1">
    <location>
        <position position="430"/>
    </location>
    <ligand>
        <name>heme</name>
        <dbReference type="ChEBI" id="CHEBI:30413"/>
    </ligand>
    <ligandPart>
        <name>Fe</name>
        <dbReference type="ChEBI" id="CHEBI:18248"/>
    </ligandPart>
</feature>
<feature type="mutagenesis site" description="Leads to resistance to voriconazole; when associated with N-401." evidence="6">
    <original>H</original>
    <variation>P</variation>
    <location>
        <position position="389"/>
    </location>
</feature>
<feature type="mutagenesis site" description="Leads to resistance to voriconazole; when associated with P-389." evidence="6">
    <original>D</original>
    <variation>N</variation>
    <location>
        <position position="401"/>
    </location>
</feature>
<feature type="mutagenesis site" description="Leads to resistance to voriconazole." evidence="6">
    <original>T</original>
    <variation>P</variation>
    <location>
        <position position="444"/>
    </location>
</feature>
<organism>
    <name type="scientific">Aspergillus flavus (strain ATCC 200026 / FGSC A1120 / IAM 13836 / NRRL 3357 / JCM 12722 / SRRC 167)</name>
    <dbReference type="NCBI Taxonomy" id="332952"/>
    <lineage>
        <taxon>Eukaryota</taxon>
        <taxon>Fungi</taxon>
        <taxon>Dikarya</taxon>
        <taxon>Ascomycota</taxon>
        <taxon>Pezizomycotina</taxon>
        <taxon>Eurotiomycetes</taxon>
        <taxon>Eurotiomycetidae</taxon>
        <taxon>Eurotiales</taxon>
        <taxon>Aspergillaceae</taxon>
        <taxon>Aspergillus</taxon>
        <taxon>Aspergillus subgen. Circumdati</taxon>
    </lineage>
</organism>
<gene>
    <name evidence="8" type="primary">cyp51B</name>
    <name type="ORF">AFLA_131060</name>
</gene>
<dbReference type="EC" id="1.14.14.154" evidence="10"/>
<dbReference type="EMBL" id="EQ963478">
    <property type="protein sequence ID" value="EED50354.1"/>
    <property type="status" value="ALT_INIT"/>
    <property type="molecule type" value="Genomic_DNA"/>
</dbReference>
<dbReference type="RefSeq" id="XP_002379130.1">
    <property type="nucleotide sequence ID" value="XM_002379089.1"/>
</dbReference>
<dbReference type="SMR" id="B8NFL5"/>
<dbReference type="STRING" id="332952.B8NFL5"/>
<dbReference type="EnsemblFungi" id="EED50354">
    <property type="protein sequence ID" value="EED50354"/>
    <property type="gene ID" value="AFLA_131060"/>
</dbReference>
<dbReference type="VEuPathDB" id="FungiDB:AFLA_005443"/>
<dbReference type="eggNOG" id="KOG0684">
    <property type="taxonomic scope" value="Eukaryota"/>
</dbReference>
<dbReference type="HOGENOM" id="CLU_001570_15_0_1"/>
<dbReference type="UniPathway" id="UPA00766"/>
<dbReference type="GO" id="GO:0005789">
    <property type="term" value="C:endoplasmic reticulum membrane"/>
    <property type="evidence" value="ECO:0007669"/>
    <property type="project" value="UniProtKB-SubCell"/>
</dbReference>
<dbReference type="GO" id="GO:0020037">
    <property type="term" value="F:heme binding"/>
    <property type="evidence" value="ECO:0007669"/>
    <property type="project" value="InterPro"/>
</dbReference>
<dbReference type="GO" id="GO:0005506">
    <property type="term" value="F:iron ion binding"/>
    <property type="evidence" value="ECO:0007669"/>
    <property type="project" value="InterPro"/>
</dbReference>
<dbReference type="GO" id="GO:0008168">
    <property type="term" value="F:methyltransferase activity"/>
    <property type="evidence" value="ECO:0007669"/>
    <property type="project" value="UniProtKB-KW"/>
</dbReference>
<dbReference type="GO" id="GO:0008398">
    <property type="term" value="F:sterol 14-demethylase activity"/>
    <property type="evidence" value="ECO:0000304"/>
    <property type="project" value="PHI-base"/>
</dbReference>
<dbReference type="GO" id="GO:0032259">
    <property type="term" value="P:methylation"/>
    <property type="evidence" value="ECO:0007669"/>
    <property type="project" value="UniProtKB-KW"/>
</dbReference>
<dbReference type="GO" id="GO:0016126">
    <property type="term" value="P:sterol biosynthetic process"/>
    <property type="evidence" value="ECO:0007669"/>
    <property type="project" value="UniProtKB-UniPathway"/>
</dbReference>
<dbReference type="CDD" id="cd11042">
    <property type="entry name" value="CYP51-like"/>
    <property type="match status" value="1"/>
</dbReference>
<dbReference type="FunFam" id="1.10.630.10:FF:000033">
    <property type="entry name" value="14-alpha sterol demethylase"/>
    <property type="match status" value="1"/>
</dbReference>
<dbReference type="Gene3D" id="1.10.630.10">
    <property type="entry name" value="Cytochrome P450"/>
    <property type="match status" value="1"/>
</dbReference>
<dbReference type="InterPro" id="IPR050529">
    <property type="entry name" value="CYP450_sterol_14alpha_dmase"/>
</dbReference>
<dbReference type="InterPro" id="IPR001128">
    <property type="entry name" value="Cyt_P450"/>
</dbReference>
<dbReference type="InterPro" id="IPR017972">
    <property type="entry name" value="Cyt_P450_CS"/>
</dbReference>
<dbReference type="InterPro" id="IPR002403">
    <property type="entry name" value="Cyt_P450_E_grp-IV"/>
</dbReference>
<dbReference type="InterPro" id="IPR036396">
    <property type="entry name" value="Cyt_P450_sf"/>
</dbReference>
<dbReference type="PANTHER" id="PTHR24304:SF2">
    <property type="entry name" value="24-HYDROXYCHOLESTEROL 7-ALPHA-HYDROXYLASE"/>
    <property type="match status" value="1"/>
</dbReference>
<dbReference type="PANTHER" id="PTHR24304">
    <property type="entry name" value="CYTOCHROME P450 FAMILY 7"/>
    <property type="match status" value="1"/>
</dbReference>
<dbReference type="Pfam" id="PF00067">
    <property type="entry name" value="p450"/>
    <property type="match status" value="1"/>
</dbReference>
<dbReference type="PRINTS" id="PR00465">
    <property type="entry name" value="EP450IV"/>
</dbReference>
<dbReference type="PRINTS" id="PR00385">
    <property type="entry name" value="P450"/>
</dbReference>
<dbReference type="SUPFAM" id="SSF48264">
    <property type="entry name" value="Cytochrome P450"/>
    <property type="match status" value="1"/>
</dbReference>
<dbReference type="PROSITE" id="PS00086">
    <property type="entry name" value="CYTOCHROME_P450"/>
    <property type="match status" value="1"/>
</dbReference>